<dbReference type="EC" id="2.5.1.7" evidence="1"/>
<dbReference type="EMBL" id="AP006716">
    <property type="protein sequence ID" value="BAE04220.1"/>
    <property type="molecule type" value="Genomic_DNA"/>
</dbReference>
<dbReference type="RefSeq" id="WP_011275222.1">
    <property type="nucleotide sequence ID" value="NC_007168.1"/>
</dbReference>
<dbReference type="SMR" id="Q4L805"/>
<dbReference type="KEGG" id="sha:SH0911"/>
<dbReference type="eggNOG" id="COG0766">
    <property type="taxonomic scope" value="Bacteria"/>
</dbReference>
<dbReference type="HOGENOM" id="CLU_027387_0_0_9"/>
<dbReference type="OrthoDB" id="9803760at2"/>
<dbReference type="UniPathway" id="UPA00219"/>
<dbReference type="Proteomes" id="UP000000543">
    <property type="component" value="Chromosome"/>
</dbReference>
<dbReference type="GO" id="GO:0005737">
    <property type="term" value="C:cytoplasm"/>
    <property type="evidence" value="ECO:0007669"/>
    <property type="project" value="UniProtKB-SubCell"/>
</dbReference>
<dbReference type="GO" id="GO:0008760">
    <property type="term" value="F:UDP-N-acetylglucosamine 1-carboxyvinyltransferase activity"/>
    <property type="evidence" value="ECO:0007669"/>
    <property type="project" value="UniProtKB-UniRule"/>
</dbReference>
<dbReference type="GO" id="GO:0051301">
    <property type="term" value="P:cell division"/>
    <property type="evidence" value="ECO:0007669"/>
    <property type="project" value="UniProtKB-KW"/>
</dbReference>
<dbReference type="GO" id="GO:0071555">
    <property type="term" value="P:cell wall organization"/>
    <property type="evidence" value="ECO:0007669"/>
    <property type="project" value="UniProtKB-KW"/>
</dbReference>
<dbReference type="GO" id="GO:0009252">
    <property type="term" value="P:peptidoglycan biosynthetic process"/>
    <property type="evidence" value="ECO:0007669"/>
    <property type="project" value="UniProtKB-UniRule"/>
</dbReference>
<dbReference type="GO" id="GO:0008360">
    <property type="term" value="P:regulation of cell shape"/>
    <property type="evidence" value="ECO:0007669"/>
    <property type="project" value="UniProtKB-KW"/>
</dbReference>
<dbReference type="GO" id="GO:0019277">
    <property type="term" value="P:UDP-N-acetylgalactosamine biosynthetic process"/>
    <property type="evidence" value="ECO:0007669"/>
    <property type="project" value="InterPro"/>
</dbReference>
<dbReference type="CDD" id="cd01555">
    <property type="entry name" value="UdpNAET"/>
    <property type="match status" value="1"/>
</dbReference>
<dbReference type="FunFam" id="3.65.10.10:FF:000001">
    <property type="entry name" value="UDP-N-acetylglucosamine 1-carboxyvinyltransferase"/>
    <property type="match status" value="1"/>
</dbReference>
<dbReference type="Gene3D" id="3.65.10.10">
    <property type="entry name" value="Enolpyruvate transferase domain"/>
    <property type="match status" value="2"/>
</dbReference>
<dbReference type="HAMAP" id="MF_00111">
    <property type="entry name" value="MurA"/>
    <property type="match status" value="1"/>
</dbReference>
<dbReference type="InterPro" id="IPR001986">
    <property type="entry name" value="Enolpyruvate_Tfrase_dom"/>
</dbReference>
<dbReference type="InterPro" id="IPR036968">
    <property type="entry name" value="Enolpyruvate_Tfrase_sf"/>
</dbReference>
<dbReference type="InterPro" id="IPR050068">
    <property type="entry name" value="MurA_subfamily"/>
</dbReference>
<dbReference type="InterPro" id="IPR013792">
    <property type="entry name" value="RNA3'P_cycl/enolpyr_Trfase_a/b"/>
</dbReference>
<dbReference type="InterPro" id="IPR005750">
    <property type="entry name" value="UDP_GlcNAc_COvinyl_MurA"/>
</dbReference>
<dbReference type="NCBIfam" id="TIGR01072">
    <property type="entry name" value="murA"/>
    <property type="match status" value="1"/>
</dbReference>
<dbReference type="NCBIfam" id="NF006873">
    <property type="entry name" value="PRK09369.1"/>
    <property type="match status" value="1"/>
</dbReference>
<dbReference type="NCBIfam" id="NF009470">
    <property type="entry name" value="PRK12830.1"/>
    <property type="match status" value="1"/>
</dbReference>
<dbReference type="PANTHER" id="PTHR43783">
    <property type="entry name" value="UDP-N-ACETYLGLUCOSAMINE 1-CARBOXYVINYLTRANSFERASE"/>
    <property type="match status" value="1"/>
</dbReference>
<dbReference type="PANTHER" id="PTHR43783:SF2">
    <property type="entry name" value="UDP-N-ACETYLGLUCOSAMINE 1-CARBOXYVINYLTRANSFERASE 2"/>
    <property type="match status" value="1"/>
</dbReference>
<dbReference type="Pfam" id="PF00275">
    <property type="entry name" value="EPSP_synthase"/>
    <property type="match status" value="1"/>
</dbReference>
<dbReference type="SUPFAM" id="SSF55205">
    <property type="entry name" value="EPT/RTPC-like"/>
    <property type="match status" value="1"/>
</dbReference>
<protein>
    <recommendedName>
        <fullName evidence="1">UDP-N-acetylglucosamine 1-carboxyvinyltransferase 1</fullName>
        <ecNumber evidence="1">2.5.1.7</ecNumber>
    </recommendedName>
    <alternativeName>
        <fullName evidence="1">Enoylpyruvate transferase 1</fullName>
    </alternativeName>
    <alternativeName>
        <fullName evidence="1">UDP-N-acetylglucosamine enolpyruvyl transferase 1</fullName>
        <shortName evidence="1">EPT 1</shortName>
    </alternativeName>
</protein>
<sequence length="423" mass="45331">MTQEVIKIRGGQTLKGDVTISGAKNSAVAIIPATLLAQGQVKLDGLPQISDVETLVSLLEDLNIKAHLNGKTLEVDTSEIENAPLPNNKVESLRASYYMMGAMLGRFKKCVIGLPGGCPLGPRPIDQHIKGFKALGAEIDESNDTSMKIEAKELHGANIFLDMVSVGATINIMLAAVHATGQTVIENAAKEPEVVDVANFLNSLGADIKGAGTSTLKINGVDSLHGSEYQIIPDRIEAGTYMCIAAAVGEEITINNIVPKHVEALTVKLKELGVDIQVDGDAEKAIIKRKSSYKNVDIKTLVYPGFATDLQQPITPLLFMADGPSFVTETIYPARFRHVDELKNMGANIEADMETGTATIKPSSLNGAEVYASDLRAGACLIIAGLLAEGVTTIYNVRHIYRGYTDIVKHLKELGANIWTEEV</sequence>
<accession>Q4L805</accession>
<comment type="function">
    <text evidence="1">Cell wall formation. Adds enolpyruvyl to UDP-N-acetylglucosamine.</text>
</comment>
<comment type="catalytic activity">
    <reaction evidence="1">
        <text>phosphoenolpyruvate + UDP-N-acetyl-alpha-D-glucosamine = UDP-N-acetyl-3-O-(1-carboxyvinyl)-alpha-D-glucosamine + phosphate</text>
        <dbReference type="Rhea" id="RHEA:18681"/>
        <dbReference type="ChEBI" id="CHEBI:43474"/>
        <dbReference type="ChEBI" id="CHEBI:57705"/>
        <dbReference type="ChEBI" id="CHEBI:58702"/>
        <dbReference type="ChEBI" id="CHEBI:68483"/>
        <dbReference type="EC" id="2.5.1.7"/>
    </reaction>
</comment>
<comment type="pathway">
    <text evidence="1">Cell wall biogenesis; peptidoglycan biosynthesis.</text>
</comment>
<comment type="subcellular location">
    <subcellularLocation>
        <location evidence="1">Cytoplasm</location>
    </subcellularLocation>
</comment>
<comment type="similarity">
    <text evidence="1">Belongs to the EPSP synthase family. MurA subfamily.</text>
</comment>
<feature type="chain" id="PRO_0000231268" description="UDP-N-acetylglucosamine 1-carboxyvinyltransferase 1">
    <location>
        <begin position="1"/>
        <end position="423"/>
    </location>
</feature>
<feature type="active site" description="Proton donor" evidence="1">
    <location>
        <position position="118"/>
    </location>
</feature>
<feature type="binding site" evidence="1">
    <location>
        <begin position="24"/>
        <end position="25"/>
    </location>
    <ligand>
        <name>phosphoenolpyruvate</name>
        <dbReference type="ChEBI" id="CHEBI:58702"/>
    </ligand>
</feature>
<feature type="binding site" evidence="1">
    <location>
        <position position="94"/>
    </location>
    <ligand>
        <name>UDP-N-acetyl-alpha-D-glucosamine</name>
        <dbReference type="ChEBI" id="CHEBI:57705"/>
    </ligand>
</feature>
<feature type="binding site" evidence="1">
    <location>
        <begin position="123"/>
        <end position="127"/>
    </location>
    <ligand>
        <name>UDP-N-acetyl-alpha-D-glucosamine</name>
        <dbReference type="ChEBI" id="CHEBI:57705"/>
    </ligand>
</feature>
<feature type="binding site" evidence="1">
    <location>
        <position position="309"/>
    </location>
    <ligand>
        <name>UDP-N-acetyl-alpha-D-glucosamine</name>
        <dbReference type="ChEBI" id="CHEBI:57705"/>
    </ligand>
</feature>
<feature type="binding site" evidence="1">
    <location>
        <position position="331"/>
    </location>
    <ligand>
        <name>UDP-N-acetyl-alpha-D-glucosamine</name>
        <dbReference type="ChEBI" id="CHEBI:57705"/>
    </ligand>
</feature>
<feature type="modified residue" description="2-(S-cysteinyl)pyruvic acid O-phosphothioketal" evidence="1">
    <location>
        <position position="118"/>
    </location>
</feature>
<keyword id="KW-0131">Cell cycle</keyword>
<keyword id="KW-0132">Cell division</keyword>
<keyword id="KW-0133">Cell shape</keyword>
<keyword id="KW-0961">Cell wall biogenesis/degradation</keyword>
<keyword id="KW-0963">Cytoplasm</keyword>
<keyword id="KW-0573">Peptidoglycan synthesis</keyword>
<keyword id="KW-0670">Pyruvate</keyword>
<keyword id="KW-0808">Transferase</keyword>
<proteinExistence type="inferred from homology"/>
<name>MURA1_STAHJ</name>
<evidence type="ECO:0000255" key="1">
    <source>
        <dbReference type="HAMAP-Rule" id="MF_00111"/>
    </source>
</evidence>
<gene>
    <name evidence="1" type="primary">murA1</name>
    <name type="synonym">murZ</name>
    <name type="ordered locus">SH0911</name>
</gene>
<organism>
    <name type="scientific">Staphylococcus haemolyticus (strain JCSC1435)</name>
    <dbReference type="NCBI Taxonomy" id="279808"/>
    <lineage>
        <taxon>Bacteria</taxon>
        <taxon>Bacillati</taxon>
        <taxon>Bacillota</taxon>
        <taxon>Bacilli</taxon>
        <taxon>Bacillales</taxon>
        <taxon>Staphylococcaceae</taxon>
        <taxon>Staphylococcus</taxon>
    </lineage>
</organism>
<reference key="1">
    <citation type="journal article" date="2005" name="J. Bacteriol.">
        <title>Whole-genome sequencing of Staphylococcus haemolyticus uncovers the extreme plasticity of its genome and the evolution of human-colonizing staphylococcal species.</title>
        <authorList>
            <person name="Takeuchi F."/>
            <person name="Watanabe S."/>
            <person name="Baba T."/>
            <person name="Yuzawa H."/>
            <person name="Ito T."/>
            <person name="Morimoto Y."/>
            <person name="Kuroda M."/>
            <person name="Cui L."/>
            <person name="Takahashi M."/>
            <person name="Ankai A."/>
            <person name="Baba S."/>
            <person name="Fukui S."/>
            <person name="Lee J.C."/>
            <person name="Hiramatsu K."/>
        </authorList>
    </citation>
    <scope>NUCLEOTIDE SEQUENCE [LARGE SCALE GENOMIC DNA]</scope>
    <source>
        <strain>JCSC1435</strain>
    </source>
</reference>